<feature type="initiator methionine" description="Removed" evidence="5">
    <location>
        <position position="1"/>
    </location>
</feature>
<feature type="chain" id="PRO_0000394150" description="ESX-1 secretion-associated protein EspL">
    <location>
        <begin position="2"/>
        <end position="115"/>
    </location>
</feature>
<feature type="modified residue" description="N-acetylserine" evidence="5">
    <location>
        <position position="2"/>
    </location>
</feature>
<comment type="function">
    <text evidence="4">Probably plays a role in host phagosome maturation arrest (PubMed:20844580).</text>
</comment>
<comment type="interaction">
    <interactant intactId="EBI-25767670">
        <id>P9WJB9</id>
    </interactant>
    <interactant intactId="EBI-26358082">
        <id>P9WJD5</id>
        <label>espD</label>
    </interactant>
    <organismsDiffer>false</organismsDiffer>
    <experiments>2</experiments>
</comment>
<comment type="disruption phenotype">
    <text evidence="1">Grows normally in liquid culture, traffics into host (human and mouse) acidified compartments early after phagocytosis, suggesting it no longer arrests phagosome maturation as well as wild-type, impaired growth in mouse macrophages (PubMed:20844580).</text>
</comment>
<evidence type="ECO:0000269" key="1">
    <source>
    </source>
</evidence>
<evidence type="ECO:0000303" key="2">
    <source>
    </source>
</evidence>
<evidence type="ECO:0000305" key="3"/>
<evidence type="ECO:0000305" key="4">
    <source>
    </source>
</evidence>
<evidence type="ECO:0007744" key="5">
    <source>
    </source>
</evidence>
<protein>
    <recommendedName>
        <fullName evidence="3">ESX-1 secretion-associated protein EspL</fullName>
    </recommendedName>
</protein>
<gene>
    <name evidence="2" type="primary">espL</name>
    <name type="ordered locus">Rv3880c</name>
</gene>
<sequence length="115" mass="12200">MSMDELDPHVARALTLAARFQSALDGTLNQMNNGSFRATDEAETVEVTINGHQWLTGLRIEDGLLKKLGAEAVAQRVNEALHNAQAAASAYNDAAGEQLTAALSAMSRAMNEGMA</sequence>
<keyword id="KW-0007">Acetylation</keyword>
<keyword id="KW-1185">Reference proteome</keyword>
<reference key="1">
    <citation type="journal article" date="1998" name="Nature">
        <title>Deciphering the biology of Mycobacterium tuberculosis from the complete genome sequence.</title>
        <authorList>
            <person name="Cole S.T."/>
            <person name="Brosch R."/>
            <person name="Parkhill J."/>
            <person name="Garnier T."/>
            <person name="Churcher C.M."/>
            <person name="Harris D.E."/>
            <person name="Gordon S.V."/>
            <person name="Eiglmeier K."/>
            <person name="Gas S."/>
            <person name="Barry C.E. III"/>
            <person name="Tekaia F."/>
            <person name="Badcock K."/>
            <person name="Basham D."/>
            <person name="Brown D."/>
            <person name="Chillingworth T."/>
            <person name="Connor R."/>
            <person name="Davies R.M."/>
            <person name="Devlin K."/>
            <person name="Feltwell T."/>
            <person name="Gentles S."/>
            <person name="Hamlin N."/>
            <person name="Holroyd S."/>
            <person name="Hornsby T."/>
            <person name="Jagels K."/>
            <person name="Krogh A."/>
            <person name="McLean J."/>
            <person name="Moule S."/>
            <person name="Murphy L.D."/>
            <person name="Oliver S."/>
            <person name="Osborne J."/>
            <person name="Quail M.A."/>
            <person name="Rajandream M.A."/>
            <person name="Rogers J."/>
            <person name="Rutter S."/>
            <person name="Seeger K."/>
            <person name="Skelton S."/>
            <person name="Squares S."/>
            <person name="Squares R."/>
            <person name="Sulston J.E."/>
            <person name="Taylor K."/>
            <person name="Whitehead S."/>
            <person name="Barrell B.G."/>
        </authorList>
    </citation>
    <scope>NUCLEOTIDE SEQUENCE [LARGE SCALE GENOMIC DNA]</scope>
    <source>
        <strain>ATCC 25618 / H37Rv</strain>
    </source>
</reference>
<reference key="2">
    <citation type="journal article" date="2009" name="PLoS Pathog.">
        <title>Systematic genetic nomenclature for type VII secretion systems.</title>
        <authorList>
            <person name="Bitter W."/>
            <person name="Houben E.N."/>
            <person name="Bottai D."/>
            <person name="Brodin P."/>
            <person name="Brown E.J."/>
            <person name="Cox J.S."/>
            <person name="Derbyshire K."/>
            <person name="Fortune S.M."/>
            <person name="Gao L.Y."/>
            <person name="Liu J."/>
            <person name="Gey van Pittius N.C."/>
            <person name="Pym A.S."/>
            <person name="Rubin E.J."/>
            <person name="Sherman D.R."/>
            <person name="Cole S.T."/>
            <person name="Brosch R."/>
        </authorList>
    </citation>
    <scope>GENE NAME</scope>
</reference>
<reference key="3">
    <citation type="journal article" date="2010" name="PLoS Pathog.">
        <title>High content phenotypic cell-based visual screen identifies Mycobacterium tuberculosis acyltrehalose-containing glycolipids involved in phagosome remodeling.</title>
        <authorList>
            <person name="Brodin P."/>
            <person name="Poquet Y."/>
            <person name="Levillain F."/>
            <person name="Peguillet I."/>
            <person name="Larrouy-Maumus G."/>
            <person name="Gilleron M."/>
            <person name="Ewann F."/>
            <person name="Christophe T."/>
            <person name="Fenistein D."/>
            <person name="Jang J."/>
            <person name="Jang M.S."/>
            <person name="Park S.J."/>
            <person name="Rauzier J."/>
            <person name="Carralot J.P."/>
            <person name="Shrimpton R."/>
            <person name="Genovesio A."/>
            <person name="Gonzalo-Asensio J.A."/>
            <person name="Puzo G."/>
            <person name="Martin C."/>
            <person name="Brosch R."/>
            <person name="Stewart G.R."/>
            <person name="Gicquel B."/>
            <person name="Neyrolles O."/>
        </authorList>
    </citation>
    <scope>FUNCTION</scope>
    <scope>DISRUPTION PHENOTYPE</scope>
    <source>
        <strain>Beijing GC1237</strain>
    </source>
</reference>
<reference key="4">
    <citation type="journal article" date="2011" name="Mol. Cell. Proteomics">
        <title>Proteogenomic analysis of Mycobacterium tuberculosis by high resolution mass spectrometry.</title>
        <authorList>
            <person name="Kelkar D.S."/>
            <person name="Kumar D."/>
            <person name="Kumar P."/>
            <person name="Balakrishnan L."/>
            <person name="Muthusamy B."/>
            <person name="Yadav A.K."/>
            <person name="Shrivastava P."/>
            <person name="Marimuthu A."/>
            <person name="Anand S."/>
            <person name="Sundaram H."/>
            <person name="Kingsbury R."/>
            <person name="Harsha H.C."/>
            <person name="Nair B."/>
            <person name="Prasad T.S."/>
            <person name="Chauhan D.S."/>
            <person name="Katoch K."/>
            <person name="Katoch V.M."/>
            <person name="Kumar P."/>
            <person name="Chaerkady R."/>
            <person name="Ramachandran S."/>
            <person name="Dash D."/>
            <person name="Pandey A."/>
        </authorList>
    </citation>
    <scope>ACETYLATION [LARGE SCALE ANALYSIS] AT SER-2</scope>
    <scope>CLEAVAGE OF INITIATOR METHIONINE [LARGE SCALE ANALYSIS]</scope>
    <scope>IDENTIFICATION BY MASS SPECTROMETRY [LARGE SCALE ANALYSIS]</scope>
    <source>
        <strain>ATCC 25618 / H37Rv</strain>
    </source>
</reference>
<proteinExistence type="evidence at protein level"/>
<name>ESPL_MYCTU</name>
<accession>P9WJB9</accession>
<accession>L0TE21</accession>
<accession>O69744</accession>
<accession>Q7D4P0</accession>
<dbReference type="EMBL" id="AL123456">
    <property type="protein sequence ID" value="CCP46709.1"/>
    <property type="molecule type" value="Genomic_DNA"/>
</dbReference>
<dbReference type="PIR" id="F70803">
    <property type="entry name" value="F70803"/>
</dbReference>
<dbReference type="RefSeq" id="NP_218397.1">
    <property type="nucleotide sequence ID" value="NC_000962.3"/>
</dbReference>
<dbReference type="RefSeq" id="WP_003399988.1">
    <property type="nucleotide sequence ID" value="NZ_NVQJ01000086.1"/>
</dbReference>
<dbReference type="SMR" id="P9WJB9"/>
<dbReference type="BioGRID" id="4355680">
    <property type="interactions" value="1"/>
</dbReference>
<dbReference type="IntAct" id="P9WJB9">
    <property type="interactions" value="16"/>
</dbReference>
<dbReference type="MINT" id="P9WJB9"/>
<dbReference type="STRING" id="83332.Rv3880c"/>
<dbReference type="iPTMnet" id="P9WJB9"/>
<dbReference type="PaxDb" id="83332-Rv3880c"/>
<dbReference type="GeneID" id="45427883"/>
<dbReference type="GeneID" id="886205"/>
<dbReference type="KEGG" id="mtu:Rv3880c"/>
<dbReference type="KEGG" id="mtv:RVBD_3880c"/>
<dbReference type="PATRIC" id="fig|83332.111.peg.4320"/>
<dbReference type="TubercuList" id="Rv3880c"/>
<dbReference type="eggNOG" id="ENOG5031T2G">
    <property type="taxonomic scope" value="Bacteria"/>
</dbReference>
<dbReference type="InParanoid" id="P9WJB9"/>
<dbReference type="OrthoDB" id="4741720at2"/>
<dbReference type="PHI-base" id="PHI:8763"/>
<dbReference type="Proteomes" id="UP000001584">
    <property type="component" value="Chromosome"/>
</dbReference>
<dbReference type="GO" id="GO:0009274">
    <property type="term" value="C:peptidoglycan-based cell wall"/>
    <property type="evidence" value="ECO:0007005"/>
    <property type="project" value="MTBBASE"/>
</dbReference>
<dbReference type="GO" id="GO:0005886">
    <property type="term" value="C:plasma membrane"/>
    <property type="evidence" value="ECO:0007005"/>
    <property type="project" value="MTBBASE"/>
</dbReference>
<dbReference type="GO" id="GO:0003677">
    <property type="term" value="F:DNA binding"/>
    <property type="evidence" value="ECO:0007669"/>
    <property type="project" value="InterPro"/>
</dbReference>
<dbReference type="GO" id="GO:0052170">
    <property type="term" value="P:symbiont-mediated suppression of host innate immune response"/>
    <property type="evidence" value="ECO:0000314"/>
    <property type="project" value="MTBBASE"/>
</dbReference>
<dbReference type="Gene3D" id="3.30.1310.10">
    <property type="entry name" value="Nucleoid-associated protein YbaB-like domain"/>
    <property type="match status" value="1"/>
</dbReference>
<dbReference type="InterPro" id="IPR036894">
    <property type="entry name" value="YbaB-like_sf"/>
</dbReference>
<dbReference type="InterPro" id="IPR004401">
    <property type="entry name" value="YbaB/EbfC"/>
</dbReference>
<dbReference type="Pfam" id="PF02575">
    <property type="entry name" value="YbaB_DNA_bd"/>
    <property type="match status" value="1"/>
</dbReference>
<dbReference type="SUPFAM" id="SSF82607">
    <property type="entry name" value="YbaB-like"/>
    <property type="match status" value="1"/>
</dbReference>
<organism>
    <name type="scientific">Mycobacterium tuberculosis (strain ATCC 25618 / H37Rv)</name>
    <dbReference type="NCBI Taxonomy" id="83332"/>
    <lineage>
        <taxon>Bacteria</taxon>
        <taxon>Bacillati</taxon>
        <taxon>Actinomycetota</taxon>
        <taxon>Actinomycetes</taxon>
        <taxon>Mycobacteriales</taxon>
        <taxon>Mycobacteriaceae</taxon>
        <taxon>Mycobacterium</taxon>
        <taxon>Mycobacterium tuberculosis complex</taxon>
    </lineage>
</organism>